<organism>
    <name type="scientific">Burkholderia mallei (strain ATCC 23344)</name>
    <dbReference type="NCBI Taxonomy" id="243160"/>
    <lineage>
        <taxon>Bacteria</taxon>
        <taxon>Pseudomonadati</taxon>
        <taxon>Pseudomonadota</taxon>
        <taxon>Betaproteobacteria</taxon>
        <taxon>Burkholderiales</taxon>
        <taxon>Burkholderiaceae</taxon>
        <taxon>Burkholderia</taxon>
        <taxon>pseudomallei group</taxon>
    </lineage>
</organism>
<protein>
    <recommendedName>
        <fullName evidence="1">Urease subunit alpha</fullName>
        <ecNumber evidence="1">3.5.1.5</ecNumber>
    </recommendedName>
    <alternativeName>
        <fullName evidence="1">Urea amidohydrolase subunit alpha</fullName>
    </alternativeName>
</protein>
<sequence>MTLRLSRRAYAEMYGPTTGDRIRLADTELLIEVERDHTLYGEEVKFGGGKVIRDGMGQSQLPAADVADTVITNAVILDHWGIVKADIAIKHGRIAAIGKAGNPDIQPGVTIAIGAATEIIAGEGLIVTAGGIDTHIHFISPQQIDEALASGVTTMIGGGTGPATGTNATTCTPGPWHMERMLQAADGWPINLGFLGKGNASRPQPLVEQIEAGAIGLKLHEDWGTTPAAIDNCLTVADDTDTQVAIHTDTLNEAGFVEATVAAFKGRTIHTYHTEGAGGGHAPDILKVCGEANVLPSSTNPTRPYTINTLDEHLDMLMVCHHLDPSIAEDLAFAESRIRRETIAAEDILHDLGALSMLSSDSQAMGRVGEVIIRTWQTAHKMKVQRGALAGDGARNDNFRAKRYVAKYTINPALTHGIAHEVGSIEPGKWADLVLWEPAFFGVKPAMIVKGGMIAVAQMGDPNASIPTPQPVHYREMFATRGGALARTSLTFVSQLALDAGIGARYGLAKRLVPVRGCRTVTKRDMIHNAWQPAIRVDPETYDVVADGALLTCEPAAVLPMAQRYFLF</sequence>
<evidence type="ECO:0000255" key="1">
    <source>
        <dbReference type="HAMAP-Rule" id="MF_01953"/>
    </source>
</evidence>
<reference key="1">
    <citation type="journal article" date="2004" name="Proc. Natl. Acad. Sci. U.S.A.">
        <title>Structural flexibility in the Burkholderia mallei genome.</title>
        <authorList>
            <person name="Nierman W.C."/>
            <person name="DeShazer D."/>
            <person name="Kim H.S."/>
            <person name="Tettelin H."/>
            <person name="Nelson K.E."/>
            <person name="Feldblyum T.V."/>
            <person name="Ulrich R.L."/>
            <person name="Ronning C.M."/>
            <person name="Brinkac L.M."/>
            <person name="Daugherty S.C."/>
            <person name="Davidsen T.D."/>
            <person name="DeBoy R.T."/>
            <person name="Dimitrov G."/>
            <person name="Dodson R.J."/>
            <person name="Durkin A.S."/>
            <person name="Gwinn M.L."/>
            <person name="Haft D.H."/>
            <person name="Khouri H.M."/>
            <person name="Kolonay J.F."/>
            <person name="Madupu R."/>
            <person name="Mohammoud Y."/>
            <person name="Nelson W.C."/>
            <person name="Radune D."/>
            <person name="Romero C.M."/>
            <person name="Sarria S."/>
            <person name="Selengut J."/>
            <person name="Shamblin C."/>
            <person name="Sullivan S.A."/>
            <person name="White O."/>
            <person name="Yu Y."/>
            <person name="Zafar N."/>
            <person name="Zhou L."/>
            <person name="Fraser C.M."/>
        </authorList>
    </citation>
    <scope>NUCLEOTIDE SEQUENCE [LARGE SCALE GENOMIC DNA]</scope>
    <source>
        <strain>ATCC 23344</strain>
    </source>
</reference>
<gene>
    <name evidence="1" type="primary">ureC</name>
    <name type="ordered locus">BMA2184</name>
</gene>
<name>URE1_BURMA</name>
<feature type="chain" id="PRO_0000234147" description="Urease subunit alpha">
    <location>
        <begin position="1"/>
        <end position="568"/>
    </location>
</feature>
<feature type="domain" description="Urease" evidence="1">
    <location>
        <begin position="130"/>
        <end position="568"/>
    </location>
</feature>
<feature type="active site" description="Proton donor" evidence="1">
    <location>
        <position position="321"/>
    </location>
</feature>
<feature type="binding site" evidence="1">
    <location>
        <position position="135"/>
    </location>
    <ligand>
        <name>Ni(2+)</name>
        <dbReference type="ChEBI" id="CHEBI:49786"/>
        <label>1</label>
    </ligand>
</feature>
<feature type="binding site" evidence="1">
    <location>
        <position position="137"/>
    </location>
    <ligand>
        <name>Ni(2+)</name>
        <dbReference type="ChEBI" id="CHEBI:49786"/>
        <label>1</label>
    </ligand>
</feature>
<feature type="binding site" description="via carbamate group" evidence="1">
    <location>
        <position position="218"/>
    </location>
    <ligand>
        <name>Ni(2+)</name>
        <dbReference type="ChEBI" id="CHEBI:49786"/>
        <label>1</label>
    </ligand>
</feature>
<feature type="binding site" description="via carbamate group" evidence="1">
    <location>
        <position position="218"/>
    </location>
    <ligand>
        <name>Ni(2+)</name>
        <dbReference type="ChEBI" id="CHEBI:49786"/>
        <label>2</label>
    </ligand>
</feature>
<feature type="binding site" evidence="1">
    <location>
        <position position="220"/>
    </location>
    <ligand>
        <name>substrate</name>
    </ligand>
</feature>
<feature type="binding site" evidence="1">
    <location>
        <position position="247"/>
    </location>
    <ligand>
        <name>Ni(2+)</name>
        <dbReference type="ChEBI" id="CHEBI:49786"/>
        <label>2</label>
    </ligand>
</feature>
<feature type="binding site" evidence="1">
    <location>
        <position position="273"/>
    </location>
    <ligand>
        <name>Ni(2+)</name>
        <dbReference type="ChEBI" id="CHEBI:49786"/>
        <label>2</label>
    </ligand>
</feature>
<feature type="binding site" evidence="1">
    <location>
        <position position="361"/>
    </location>
    <ligand>
        <name>Ni(2+)</name>
        <dbReference type="ChEBI" id="CHEBI:49786"/>
        <label>1</label>
    </ligand>
</feature>
<feature type="modified residue" description="N6-carboxylysine" evidence="1">
    <location>
        <position position="218"/>
    </location>
</feature>
<dbReference type="EC" id="3.5.1.5" evidence="1"/>
<dbReference type="EMBL" id="CP000010">
    <property type="protein sequence ID" value="AAU50299.1"/>
    <property type="molecule type" value="Genomic_DNA"/>
</dbReference>
<dbReference type="RefSeq" id="WP_004186033.1">
    <property type="nucleotide sequence ID" value="NC_006348.1"/>
</dbReference>
<dbReference type="RefSeq" id="YP_103750.1">
    <property type="nucleotide sequence ID" value="NC_006348.1"/>
</dbReference>
<dbReference type="SMR" id="Q62HS0"/>
<dbReference type="MEROPS" id="M38.982"/>
<dbReference type="GeneID" id="92979887"/>
<dbReference type="KEGG" id="bma:BMA2184"/>
<dbReference type="PATRIC" id="fig|243160.12.peg.2253"/>
<dbReference type="eggNOG" id="COG0804">
    <property type="taxonomic scope" value="Bacteria"/>
</dbReference>
<dbReference type="HOGENOM" id="CLU_000980_0_0_4"/>
<dbReference type="UniPathway" id="UPA00258">
    <property type="reaction ID" value="UER00370"/>
</dbReference>
<dbReference type="Proteomes" id="UP000006693">
    <property type="component" value="Chromosome 1"/>
</dbReference>
<dbReference type="GO" id="GO:0005737">
    <property type="term" value="C:cytoplasm"/>
    <property type="evidence" value="ECO:0007669"/>
    <property type="project" value="UniProtKB-SubCell"/>
</dbReference>
<dbReference type="GO" id="GO:0016151">
    <property type="term" value="F:nickel cation binding"/>
    <property type="evidence" value="ECO:0007669"/>
    <property type="project" value="UniProtKB-UniRule"/>
</dbReference>
<dbReference type="GO" id="GO:0009039">
    <property type="term" value="F:urease activity"/>
    <property type="evidence" value="ECO:0007669"/>
    <property type="project" value="UniProtKB-UniRule"/>
</dbReference>
<dbReference type="GO" id="GO:0043419">
    <property type="term" value="P:urea catabolic process"/>
    <property type="evidence" value="ECO:0007669"/>
    <property type="project" value="UniProtKB-UniRule"/>
</dbReference>
<dbReference type="CDD" id="cd00375">
    <property type="entry name" value="Urease_alpha"/>
    <property type="match status" value="1"/>
</dbReference>
<dbReference type="Gene3D" id="3.20.20.140">
    <property type="entry name" value="Metal-dependent hydrolases"/>
    <property type="match status" value="1"/>
</dbReference>
<dbReference type="Gene3D" id="2.30.40.10">
    <property type="entry name" value="Urease, subunit C, domain 1"/>
    <property type="match status" value="1"/>
</dbReference>
<dbReference type="HAMAP" id="MF_01953">
    <property type="entry name" value="Urease_alpha"/>
    <property type="match status" value="1"/>
</dbReference>
<dbReference type="InterPro" id="IPR006680">
    <property type="entry name" value="Amidohydro-rel"/>
</dbReference>
<dbReference type="InterPro" id="IPR011059">
    <property type="entry name" value="Metal-dep_hydrolase_composite"/>
</dbReference>
<dbReference type="InterPro" id="IPR032466">
    <property type="entry name" value="Metal_Hydrolase"/>
</dbReference>
<dbReference type="InterPro" id="IPR011612">
    <property type="entry name" value="Urease_alpha_N_dom"/>
</dbReference>
<dbReference type="InterPro" id="IPR050112">
    <property type="entry name" value="Urease_alpha_subunit"/>
</dbReference>
<dbReference type="InterPro" id="IPR017950">
    <property type="entry name" value="Urease_AS"/>
</dbReference>
<dbReference type="InterPro" id="IPR005848">
    <property type="entry name" value="Urease_asu"/>
</dbReference>
<dbReference type="InterPro" id="IPR017951">
    <property type="entry name" value="Urease_asu_c"/>
</dbReference>
<dbReference type="InterPro" id="IPR029754">
    <property type="entry name" value="Urease_Ni-bd"/>
</dbReference>
<dbReference type="NCBIfam" id="NF009685">
    <property type="entry name" value="PRK13206.1"/>
    <property type="match status" value="1"/>
</dbReference>
<dbReference type="NCBIfam" id="NF009686">
    <property type="entry name" value="PRK13207.1"/>
    <property type="match status" value="1"/>
</dbReference>
<dbReference type="NCBIfam" id="TIGR01792">
    <property type="entry name" value="urease_alph"/>
    <property type="match status" value="1"/>
</dbReference>
<dbReference type="PANTHER" id="PTHR43440">
    <property type="entry name" value="UREASE"/>
    <property type="match status" value="1"/>
</dbReference>
<dbReference type="PANTHER" id="PTHR43440:SF1">
    <property type="entry name" value="UREASE"/>
    <property type="match status" value="1"/>
</dbReference>
<dbReference type="Pfam" id="PF01979">
    <property type="entry name" value="Amidohydro_1"/>
    <property type="match status" value="1"/>
</dbReference>
<dbReference type="Pfam" id="PF00449">
    <property type="entry name" value="Urease_alpha"/>
    <property type="match status" value="1"/>
</dbReference>
<dbReference type="PRINTS" id="PR01752">
    <property type="entry name" value="UREASE"/>
</dbReference>
<dbReference type="SUPFAM" id="SSF51338">
    <property type="entry name" value="Composite domain of metallo-dependent hydrolases"/>
    <property type="match status" value="2"/>
</dbReference>
<dbReference type="SUPFAM" id="SSF51556">
    <property type="entry name" value="Metallo-dependent hydrolases"/>
    <property type="match status" value="1"/>
</dbReference>
<dbReference type="PROSITE" id="PS01120">
    <property type="entry name" value="UREASE_1"/>
    <property type="match status" value="1"/>
</dbReference>
<dbReference type="PROSITE" id="PS00145">
    <property type="entry name" value="UREASE_2"/>
    <property type="match status" value="1"/>
</dbReference>
<dbReference type="PROSITE" id="PS51368">
    <property type="entry name" value="UREASE_3"/>
    <property type="match status" value="1"/>
</dbReference>
<keyword id="KW-0963">Cytoplasm</keyword>
<keyword id="KW-0378">Hydrolase</keyword>
<keyword id="KW-0479">Metal-binding</keyword>
<keyword id="KW-0533">Nickel</keyword>
<keyword id="KW-1185">Reference proteome</keyword>
<proteinExistence type="inferred from homology"/>
<comment type="catalytic activity">
    <reaction evidence="1">
        <text>urea + 2 H2O + H(+) = hydrogencarbonate + 2 NH4(+)</text>
        <dbReference type="Rhea" id="RHEA:20557"/>
        <dbReference type="ChEBI" id="CHEBI:15377"/>
        <dbReference type="ChEBI" id="CHEBI:15378"/>
        <dbReference type="ChEBI" id="CHEBI:16199"/>
        <dbReference type="ChEBI" id="CHEBI:17544"/>
        <dbReference type="ChEBI" id="CHEBI:28938"/>
        <dbReference type="EC" id="3.5.1.5"/>
    </reaction>
</comment>
<comment type="cofactor">
    <cofactor evidence="1">
        <name>Ni cation</name>
        <dbReference type="ChEBI" id="CHEBI:25516"/>
    </cofactor>
    <text evidence="1">Binds 2 nickel ions per subunit.</text>
</comment>
<comment type="pathway">
    <text evidence="1">Nitrogen metabolism; urea degradation; CO(2) and NH(3) from urea (urease route): step 1/1.</text>
</comment>
<comment type="subunit">
    <text evidence="1">Heterotrimer of UreA (gamma), UreB (beta) and UreC (alpha) subunits. Three heterotrimers associate to form the active enzyme.</text>
</comment>
<comment type="subcellular location">
    <subcellularLocation>
        <location evidence="1">Cytoplasm</location>
    </subcellularLocation>
</comment>
<comment type="PTM">
    <text evidence="1">Carboxylation allows a single lysine to coordinate two nickel ions.</text>
</comment>
<comment type="similarity">
    <text evidence="1">Belongs to the metallo-dependent hydrolases superfamily. Urease alpha subunit family.</text>
</comment>
<accession>Q62HS0</accession>